<organism>
    <name type="scientific">Staphylococcus aureus (strain COL)</name>
    <dbReference type="NCBI Taxonomy" id="93062"/>
    <lineage>
        <taxon>Bacteria</taxon>
        <taxon>Bacillati</taxon>
        <taxon>Bacillota</taxon>
        <taxon>Bacilli</taxon>
        <taxon>Bacillales</taxon>
        <taxon>Staphylococcaceae</taxon>
        <taxon>Staphylococcus</taxon>
    </lineage>
</organism>
<feature type="chain" id="PRO_0000100103" description="Putative 3-methyladenine DNA glycosylase">
    <location>
        <begin position="1"/>
        <end position="202"/>
    </location>
</feature>
<comment type="similarity">
    <text evidence="1">Belongs to the DNA glycosylase MPG family.</text>
</comment>
<protein>
    <recommendedName>
        <fullName evidence="1">Putative 3-methyladenine DNA glycosylase</fullName>
        <ecNumber evidence="1">3.2.2.-</ecNumber>
    </recommendedName>
</protein>
<dbReference type="EC" id="3.2.2.-" evidence="1"/>
<dbReference type="EMBL" id="CP000046">
    <property type="protein sequence ID" value="AAW37167.1"/>
    <property type="molecule type" value="Genomic_DNA"/>
</dbReference>
<dbReference type="RefSeq" id="WP_000348300.1">
    <property type="nucleotide sequence ID" value="NZ_JBGOFO010000004.1"/>
</dbReference>
<dbReference type="SMR" id="Q5HDL2"/>
<dbReference type="KEGG" id="sac:SACOL2339"/>
<dbReference type="HOGENOM" id="CLU_060471_2_0_9"/>
<dbReference type="Proteomes" id="UP000000530">
    <property type="component" value="Chromosome"/>
</dbReference>
<dbReference type="GO" id="GO:0003905">
    <property type="term" value="F:alkylbase DNA N-glycosylase activity"/>
    <property type="evidence" value="ECO:0007669"/>
    <property type="project" value="InterPro"/>
</dbReference>
<dbReference type="GO" id="GO:0003677">
    <property type="term" value="F:DNA binding"/>
    <property type="evidence" value="ECO:0007669"/>
    <property type="project" value="InterPro"/>
</dbReference>
<dbReference type="GO" id="GO:0006284">
    <property type="term" value="P:base-excision repair"/>
    <property type="evidence" value="ECO:0007669"/>
    <property type="project" value="InterPro"/>
</dbReference>
<dbReference type="CDD" id="cd00540">
    <property type="entry name" value="AAG"/>
    <property type="match status" value="1"/>
</dbReference>
<dbReference type="FunFam" id="3.10.300.10:FF:000001">
    <property type="entry name" value="Putative 3-methyladenine DNA glycosylase"/>
    <property type="match status" value="1"/>
</dbReference>
<dbReference type="Gene3D" id="3.10.300.10">
    <property type="entry name" value="Methylpurine-DNA glycosylase (MPG)"/>
    <property type="match status" value="1"/>
</dbReference>
<dbReference type="HAMAP" id="MF_00527">
    <property type="entry name" value="3MGH"/>
    <property type="match status" value="1"/>
</dbReference>
<dbReference type="InterPro" id="IPR011034">
    <property type="entry name" value="Formyl_transferase-like_C_sf"/>
</dbReference>
<dbReference type="InterPro" id="IPR003180">
    <property type="entry name" value="MPG"/>
</dbReference>
<dbReference type="InterPro" id="IPR036995">
    <property type="entry name" value="MPG_sf"/>
</dbReference>
<dbReference type="NCBIfam" id="TIGR00567">
    <property type="entry name" value="3mg"/>
    <property type="match status" value="1"/>
</dbReference>
<dbReference type="PANTHER" id="PTHR10429">
    <property type="entry name" value="DNA-3-METHYLADENINE GLYCOSYLASE"/>
    <property type="match status" value="1"/>
</dbReference>
<dbReference type="PANTHER" id="PTHR10429:SF0">
    <property type="entry name" value="DNA-3-METHYLADENINE GLYCOSYLASE"/>
    <property type="match status" value="1"/>
</dbReference>
<dbReference type="Pfam" id="PF02245">
    <property type="entry name" value="Pur_DNA_glyco"/>
    <property type="match status" value="1"/>
</dbReference>
<dbReference type="SUPFAM" id="SSF50486">
    <property type="entry name" value="FMT C-terminal domain-like"/>
    <property type="match status" value="1"/>
</dbReference>
<keyword id="KW-0227">DNA damage</keyword>
<keyword id="KW-0234">DNA repair</keyword>
<keyword id="KW-0378">Hydrolase</keyword>
<accession>Q5HDL2</accession>
<name>3MGH_STAAC</name>
<gene>
    <name type="ordered locus">SACOL2339</name>
</gene>
<sequence>MDFVNNDTRQIAKNLLGVKVIYQDTTQTYTGYIVETEAYLGLNDRAAHGYGGKITPKVTSLYKRGGTIYAHVMHTHLLINFVTKSEGIPEGVLIRAIEPEEGLSAMFRNRGKKGYEVTNGPGKWTKAFNIPRAIDGATLNDCRLSIDTKNRKYPKDIIASPRIGIPNKGDWTHKSLRYTVKGNPFVSRMRKSDCMFPEDTWK</sequence>
<reference key="1">
    <citation type="journal article" date="2005" name="J. Bacteriol.">
        <title>Insights on evolution of virulence and resistance from the complete genome analysis of an early methicillin-resistant Staphylococcus aureus strain and a biofilm-producing methicillin-resistant Staphylococcus epidermidis strain.</title>
        <authorList>
            <person name="Gill S.R."/>
            <person name="Fouts D.E."/>
            <person name="Archer G.L."/>
            <person name="Mongodin E.F."/>
            <person name="DeBoy R.T."/>
            <person name="Ravel J."/>
            <person name="Paulsen I.T."/>
            <person name="Kolonay J.F."/>
            <person name="Brinkac L.M."/>
            <person name="Beanan M.J."/>
            <person name="Dodson R.J."/>
            <person name="Daugherty S.C."/>
            <person name="Madupu R."/>
            <person name="Angiuoli S.V."/>
            <person name="Durkin A.S."/>
            <person name="Haft D.H."/>
            <person name="Vamathevan J.J."/>
            <person name="Khouri H."/>
            <person name="Utterback T.R."/>
            <person name="Lee C."/>
            <person name="Dimitrov G."/>
            <person name="Jiang L."/>
            <person name="Qin H."/>
            <person name="Weidman J."/>
            <person name="Tran K."/>
            <person name="Kang K.H."/>
            <person name="Hance I.R."/>
            <person name="Nelson K.E."/>
            <person name="Fraser C.M."/>
        </authorList>
    </citation>
    <scope>NUCLEOTIDE SEQUENCE [LARGE SCALE GENOMIC DNA]</scope>
    <source>
        <strain>COL</strain>
    </source>
</reference>
<proteinExistence type="inferred from homology"/>
<evidence type="ECO:0000255" key="1">
    <source>
        <dbReference type="HAMAP-Rule" id="MF_00527"/>
    </source>
</evidence>